<gene>
    <name evidence="1" type="primary">proB</name>
    <name type="ordered locus">BCB4264_A2994</name>
</gene>
<dbReference type="EC" id="2.7.2.11" evidence="1"/>
<dbReference type="EMBL" id="CP001176">
    <property type="protein sequence ID" value="ACK59323.1"/>
    <property type="molecule type" value="Genomic_DNA"/>
</dbReference>
<dbReference type="RefSeq" id="WP_000744802.1">
    <property type="nucleotide sequence ID" value="NC_011725.1"/>
</dbReference>
<dbReference type="SMR" id="B7H674"/>
<dbReference type="KEGG" id="bcb:BCB4264_A2994"/>
<dbReference type="HOGENOM" id="CLU_025400_2_0_9"/>
<dbReference type="UniPathway" id="UPA00098">
    <property type="reaction ID" value="UER00359"/>
</dbReference>
<dbReference type="Proteomes" id="UP000007096">
    <property type="component" value="Chromosome"/>
</dbReference>
<dbReference type="GO" id="GO:0005829">
    <property type="term" value="C:cytosol"/>
    <property type="evidence" value="ECO:0007669"/>
    <property type="project" value="TreeGrafter"/>
</dbReference>
<dbReference type="GO" id="GO:0005524">
    <property type="term" value="F:ATP binding"/>
    <property type="evidence" value="ECO:0007669"/>
    <property type="project" value="UniProtKB-KW"/>
</dbReference>
<dbReference type="GO" id="GO:0004349">
    <property type="term" value="F:glutamate 5-kinase activity"/>
    <property type="evidence" value="ECO:0007669"/>
    <property type="project" value="UniProtKB-UniRule"/>
</dbReference>
<dbReference type="GO" id="GO:0003723">
    <property type="term" value="F:RNA binding"/>
    <property type="evidence" value="ECO:0007669"/>
    <property type="project" value="InterPro"/>
</dbReference>
<dbReference type="GO" id="GO:0055129">
    <property type="term" value="P:L-proline biosynthetic process"/>
    <property type="evidence" value="ECO:0007669"/>
    <property type="project" value="UniProtKB-UniRule"/>
</dbReference>
<dbReference type="CDD" id="cd04242">
    <property type="entry name" value="AAK_G5K_ProB"/>
    <property type="match status" value="1"/>
</dbReference>
<dbReference type="CDD" id="cd21157">
    <property type="entry name" value="PUA_G5K"/>
    <property type="match status" value="1"/>
</dbReference>
<dbReference type="FunFam" id="2.30.130.10:FF:000007">
    <property type="entry name" value="Glutamate 5-kinase"/>
    <property type="match status" value="1"/>
</dbReference>
<dbReference type="FunFam" id="3.40.1160.10:FF:000018">
    <property type="entry name" value="Glutamate 5-kinase"/>
    <property type="match status" value="1"/>
</dbReference>
<dbReference type="Gene3D" id="3.40.1160.10">
    <property type="entry name" value="Acetylglutamate kinase-like"/>
    <property type="match status" value="1"/>
</dbReference>
<dbReference type="Gene3D" id="2.30.130.10">
    <property type="entry name" value="PUA domain"/>
    <property type="match status" value="1"/>
</dbReference>
<dbReference type="HAMAP" id="MF_00456">
    <property type="entry name" value="ProB"/>
    <property type="match status" value="1"/>
</dbReference>
<dbReference type="InterPro" id="IPR036393">
    <property type="entry name" value="AceGlu_kinase-like_sf"/>
</dbReference>
<dbReference type="InterPro" id="IPR001048">
    <property type="entry name" value="Asp/Glu/Uridylate_kinase"/>
</dbReference>
<dbReference type="InterPro" id="IPR041739">
    <property type="entry name" value="G5K_ProB"/>
</dbReference>
<dbReference type="InterPro" id="IPR001057">
    <property type="entry name" value="Glu/AcGlu_kinase"/>
</dbReference>
<dbReference type="InterPro" id="IPR011529">
    <property type="entry name" value="Glu_5kinase"/>
</dbReference>
<dbReference type="InterPro" id="IPR005715">
    <property type="entry name" value="Glu_5kinase/COase_Synthase"/>
</dbReference>
<dbReference type="InterPro" id="IPR019797">
    <property type="entry name" value="Glutamate_5-kinase_CS"/>
</dbReference>
<dbReference type="InterPro" id="IPR002478">
    <property type="entry name" value="PUA"/>
</dbReference>
<dbReference type="InterPro" id="IPR015947">
    <property type="entry name" value="PUA-like_sf"/>
</dbReference>
<dbReference type="InterPro" id="IPR036974">
    <property type="entry name" value="PUA_sf"/>
</dbReference>
<dbReference type="NCBIfam" id="TIGR01027">
    <property type="entry name" value="proB"/>
    <property type="match status" value="1"/>
</dbReference>
<dbReference type="PANTHER" id="PTHR43654">
    <property type="entry name" value="GLUTAMATE 5-KINASE"/>
    <property type="match status" value="1"/>
</dbReference>
<dbReference type="PANTHER" id="PTHR43654:SF1">
    <property type="entry name" value="ISOPENTENYL PHOSPHATE KINASE"/>
    <property type="match status" value="1"/>
</dbReference>
<dbReference type="Pfam" id="PF00696">
    <property type="entry name" value="AA_kinase"/>
    <property type="match status" value="1"/>
</dbReference>
<dbReference type="Pfam" id="PF01472">
    <property type="entry name" value="PUA"/>
    <property type="match status" value="1"/>
</dbReference>
<dbReference type="PIRSF" id="PIRSF000729">
    <property type="entry name" value="GK"/>
    <property type="match status" value="1"/>
</dbReference>
<dbReference type="PRINTS" id="PR00474">
    <property type="entry name" value="GLU5KINASE"/>
</dbReference>
<dbReference type="SMART" id="SM00359">
    <property type="entry name" value="PUA"/>
    <property type="match status" value="1"/>
</dbReference>
<dbReference type="SUPFAM" id="SSF53633">
    <property type="entry name" value="Carbamate kinase-like"/>
    <property type="match status" value="1"/>
</dbReference>
<dbReference type="SUPFAM" id="SSF88697">
    <property type="entry name" value="PUA domain-like"/>
    <property type="match status" value="1"/>
</dbReference>
<dbReference type="PROSITE" id="PS00902">
    <property type="entry name" value="GLUTAMATE_5_KINASE"/>
    <property type="match status" value="1"/>
</dbReference>
<dbReference type="PROSITE" id="PS50890">
    <property type="entry name" value="PUA"/>
    <property type="match status" value="1"/>
</dbReference>
<protein>
    <recommendedName>
        <fullName evidence="1">Glutamate 5-kinase</fullName>
        <ecNumber evidence="1">2.7.2.11</ecNumber>
    </recommendedName>
    <alternativeName>
        <fullName evidence="1">Gamma-glutamyl kinase</fullName>
        <shortName evidence="1">GK</shortName>
    </alternativeName>
</protein>
<evidence type="ECO:0000255" key="1">
    <source>
        <dbReference type="HAMAP-Rule" id="MF_00456"/>
    </source>
</evidence>
<organism>
    <name type="scientific">Bacillus cereus (strain B4264)</name>
    <dbReference type="NCBI Taxonomy" id="405532"/>
    <lineage>
        <taxon>Bacteria</taxon>
        <taxon>Bacillati</taxon>
        <taxon>Bacillota</taxon>
        <taxon>Bacilli</taxon>
        <taxon>Bacillales</taxon>
        <taxon>Bacillaceae</taxon>
        <taxon>Bacillus</taxon>
        <taxon>Bacillus cereus group</taxon>
    </lineage>
</organism>
<keyword id="KW-0028">Amino-acid biosynthesis</keyword>
<keyword id="KW-0067">ATP-binding</keyword>
<keyword id="KW-0963">Cytoplasm</keyword>
<keyword id="KW-0418">Kinase</keyword>
<keyword id="KW-0547">Nucleotide-binding</keyword>
<keyword id="KW-0641">Proline biosynthesis</keyword>
<keyword id="KW-0808">Transferase</keyword>
<sequence length="367" mass="39371">MKKQRVVVKIGSSSLADSHGGISTEQLSDHVAALARLKEDGHEVVLITSGAVAAGFSALGYPSRPVTIKGKQAAAAVGQSLLMQAYTEEFRKYGIVTAQLLLTRSDFSRKEQYSNAYATLGELLNRSALPIINENDSISLEELTFGDNDMLSALVSGLVSADMLMIFTDVNGLYDKNPQKNADAKKYYFLPEVTEEISSLAGDAGSKLGTGGMKSKIDAAKTALSLGVSVFIGTGRGQEKFVDVLKGKGDGTYVGNAPQKEMKMNKQWIALHSLVSGQIEVDAGAATAIIQHGKSLLPAGVTNVLGFFQVGEVVEVVTQQGRVIGKGQCTYSAEELRDVKGMQSQDIQVRGERHSYEVIHRDHWVSL</sequence>
<accession>B7H674</accession>
<name>PROB_BACC4</name>
<feature type="chain" id="PRO_1000125211" description="Glutamate 5-kinase">
    <location>
        <begin position="1"/>
        <end position="367"/>
    </location>
</feature>
<feature type="domain" description="PUA" evidence="1">
    <location>
        <begin position="276"/>
        <end position="350"/>
    </location>
</feature>
<feature type="binding site" evidence="1">
    <location>
        <position position="9"/>
    </location>
    <ligand>
        <name>ATP</name>
        <dbReference type="ChEBI" id="CHEBI:30616"/>
    </ligand>
</feature>
<feature type="binding site" evidence="1">
    <location>
        <position position="49"/>
    </location>
    <ligand>
        <name>substrate</name>
    </ligand>
</feature>
<feature type="binding site" evidence="1">
    <location>
        <position position="136"/>
    </location>
    <ligand>
        <name>substrate</name>
    </ligand>
</feature>
<feature type="binding site" evidence="1">
    <location>
        <position position="148"/>
    </location>
    <ligand>
        <name>substrate</name>
    </ligand>
</feature>
<feature type="binding site" evidence="1">
    <location>
        <begin position="168"/>
        <end position="169"/>
    </location>
    <ligand>
        <name>ATP</name>
        <dbReference type="ChEBI" id="CHEBI:30616"/>
    </ligand>
</feature>
<feature type="binding site" evidence="1">
    <location>
        <begin position="210"/>
        <end position="216"/>
    </location>
    <ligand>
        <name>ATP</name>
        <dbReference type="ChEBI" id="CHEBI:30616"/>
    </ligand>
</feature>
<proteinExistence type="inferred from homology"/>
<comment type="function">
    <text evidence="1">Catalyzes the transfer of a phosphate group to glutamate to form L-glutamate 5-phosphate.</text>
</comment>
<comment type="catalytic activity">
    <reaction evidence="1">
        <text>L-glutamate + ATP = L-glutamyl 5-phosphate + ADP</text>
        <dbReference type="Rhea" id="RHEA:14877"/>
        <dbReference type="ChEBI" id="CHEBI:29985"/>
        <dbReference type="ChEBI" id="CHEBI:30616"/>
        <dbReference type="ChEBI" id="CHEBI:58274"/>
        <dbReference type="ChEBI" id="CHEBI:456216"/>
        <dbReference type="EC" id="2.7.2.11"/>
    </reaction>
</comment>
<comment type="pathway">
    <text evidence="1">Amino-acid biosynthesis; L-proline biosynthesis; L-glutamate 5-semialdehyde from L-glutamate: step 1/2.</text>
</comment>
<comment type="subcellular location">
    <subcellularLocation>
        <location evidence="1">Cytoplasm</location>
    </subcellularLocation>
</comment>
<comment type="similarity">
    <text evidence="1">Belongs to the glutamate 5-kinase family.</text>
</comment>
<reference key="1">
    <citation type="submission" date="2008-10" db="EMBL/GenBank/DDBJ databases">
        <title>Genome sequence of Bacillus cereus B4264.</title>
        <authorList>
            <person name="Dodson R.J."/>
            <person name="Durkin A.S."/>
            <person name="Rosovitz M.J."/>
            <person name="Rasko D.A."/>
            <person name="Hoffmaster A."/>
            <person name="Ravel J."/>
            <person name="Sutton G."/>
        </authorList>
    </citation>
    <scope>NUCLEOTIDE SEQUENCE [LARGE SCALE GENOMIC DNA]</scope>
    <source>
        <strain>B4264</strain>
    </source>
</reference>